<sequence>MASGLVRLLQQGPRCLLAPVAPKLVPPVRGVKRGFRAAFRFQKELERQRLLRCPPPPVRRSEKPNWDYHAEIQAFGHRLQENFSLDLLKTAFVNSCYIKSEEAKRQQLGIEKEAVLLNLKSNQELSEQGTSFSQTCLTQFLEDEYPDLPTEGIKNLVEFLTGEDVVCHVARNLAVEQLTLSEEFPVPPTVLQQTFFAVIGALLQSSGPERTALFIRDFLITQMTGKELFEMWKIINPMGLLVEELKKRNISAPESRLTRQSGGTTALPLYFVGLYCDKKLIAEGPGETVLVAEEEAARVALRKLYGFTENRRPWNYSKPKETLRAEKSITAS</sequence>
<accession>Q5REY8</accession>
<protein>
    <recommendedName>
        <fullName evidence="4">Large ribosomal subunit protein mL44</fullName>
        <ecNumber>3.1.26.-</ecNumber>
    </recommendedName>
    <alternativeName>
        <fullName>39S ribosomal protein L44, mitochondrial</fullName>
        <shortName>L44mt</shortName>
        <shortName>MRP-L44</shortName>
    </alternativeName>
</protein>
<evidence type="ECO:0000250" key="1"/>
<evidence type="ECO:0000250" key="2">
    <source>
        <dbReference type="UniProtKB" id="Q9H9J2"/>
    </source>
</evidence>
<evidence type="ECO:0000255" key="3">
    <source>
        <dbReference type="PROSITE-ProRule" id="PRU00266"/>
    </source>
</evidence>
<evidence type="ECO:0000305" key="4"/>
<proteinExistence type="evidence at transcript level"/>
<keyword id="KW-0255">Endonuclease</keyword>
<keyword id="KW-0378">Hydrolase</keyword>
<keyword id="KW-0496">Mitochondrion</keyword>
<keyword id="KW-0540">Nuclease</keyword>
<keyword id="KW-1185">Reference proteome</keyword>
<keyword id="KW-0687">Ribonucleoprotein</keyword>
<keyword id="KW-0689">Ribosomal protein</keyword>
<keyword id="KW-0694">RNA-binding</keyword>
<keyword id="KW-0809">Transit peptide</keyword>
<gene>
    <name type="primary">MRPL44</name>
</gene>
<reference key="1">
    <citation type="submission" date="2004-11" db="EMBL/GenBank/DDBJ databases">
        <authorList>
            <consortium name="The German cDNA consortium"/>
        </authorList>
    </citation>
    <scope>NUCLEOTIDE SEQUENCE [LARGE SCALE MRNA]</scope>
    <source>
        <tissue>Kidney</tissue>
    </source>
</reference>
<dbReference type="EC" id="3.1.26.-"/>
<dbReference type="EMBL" id="CR857375">
    <property type="protein sequence ID" value="CAH89669.1"/>
    <property type="molecule type" value="mRNA"/>
</dbReference>
<dbReference type="RefSeq" id="NP_001127183.1">
    <property type="nucleotide sequence ID" value="NM_001133711.1"/>
</dbReference>
<dbReference type="SMR" id="Q5REY8"/>
<dbReference type="FunCoup" id="Q5REY8">
    <property type="interactions" value="1607"/>
</dbReference>
<dbReference type="STRING" id="9601.ENSPPYP00000014783"/>
<dbReference type="GeneID" id="100174237"/>
<dbReference type="KEGG" id="pon:100174237"/>
<dbReference type="CTD" id="65080"/>
<dbReference type="eggNOG" id="KOG3769">
    <property type="taxonomic scope" value="Eukaryota"/>
</dbReference>
<dbReference type="InParanoid" id="Q5REY8"/>
<dbReference type="OrthoDB" id="444135at2759"/>
<dbReference type="Proteomes" id="UP000001595">
    <property type="component" value="Unplaced"/>
</dbReference>
<dbReference type="GO" id="GO:0070877">
    <property type="term" value="C:microprocessor complex"/>
    <property type="evidence" value="ECO:0007669"/>
    <property type="project" value="TreeGrafter"/>
</dbReference>
<dbReference type="GO" id="GO:0005762">
    <property type="term" value="C:mitochondrial large ribosomal subunit"/>
    <property type="evidence" value="ECO:0000250"/>
    <property type="project" value="UniProtKB"/>
</dbReference>
<dbReference type="GO" id="GO:0003725">
    <property type="term" value="F:double-stranded RNA binding"/>
    <property type="evidence" value="ECO:0007669"/>
    <property type="project" value="InterPro"/>
</dbReference>
<dbReference type="GO" id="GO:0004525">
    <property type="term" value="F:ribonuclease III activity"/>
    <property type="evidence" value="ECO:0007669"/>
    <property type="project" value="InterPro"/>
</dbReference>
<dbReference type="GO" id="GO:0070125">
    <property type="term" value="P:mitochondrial translational elongation"/>
    <property type="evidence" value="ECO:0000250"/>
    <property type="project" value="UniProtKB"/>
</dbReference>
<dbReference type="GO" id="GO:0006396">
    <property type="term" value="P:RNA processing"/>
    <property type="evidence" value="ECO:0007669"/>
    <property type="project" value="InterPro"/>
</dbReference>
<dbReference type="CDD" id="cd19874">
    <property type="entry name" value="DSRM_MRPL44"/>
    <property type="match status" value="1"/>
</dbReference>
<dbReference type="FunFam" id="1.10.1520.10:FF:000010">
    <property type="entry name" value="39S ribosomal protein L44, mitochondrial"/>
    <property type="match status" value="1"/>
</dbReference>
<dbReference type="FunFam" id="3.30.160.20:FF:000037">
    <property type="entry name" value="39S ribosomal protein L44, mitochondrial"/>
    <property type="match status" value="1"/>
</dbReference>
<dbReference type="Gene3D" id="3.30.160.20">
    <property type="match status" value="1"/>
</dbReference>
<dbReference type="Gene3D" id="1.10.1520.10">
    <property type="entry name" value="Ribonuclease III domain"/>
    <property type="match status" value="1"/>
</dbReference>
<dbReference type="InterPro" id="IPR014720">
    <property type="entry name" value="dsRBD_dom"/>
</dbReference>
<dbReference type="InterPro" id="IPR044444">
    <property type="entry name" value="Ribosomal_mL44_DSRM_metazoa"/>
</dbReference>
<dbReference type="InterPro" id="IPR055189">
    <property type="entry name" value="RM44_endonuclase"/>
</dbReference>
<dbReference type="InterPro" id="IPR036389">
    <property type="entry name" value="RNase_III_sf"/>
</dbReference>
<dbReference type="PANTHER" id="PTHR11207:SF5">
    <property type="entry name" value="LARGE RIBOSOMAL SUBUNIT PROTEIN ML44"/>
    <property type="match status" value="1"/>
</dbReference>
<dbReference type="PANTHER" id="PTHR11207">
    <property type="entry name" value="RIBONUCLEASE III"/>
    <property type="match status" value="1"/>
</dbReference>
<dbReference type="Pfam" id="PF22892">
    <property type="entry name" value="DSRM_MRPL44"/>
    <property type="match status" value="1"/>
</dbReference>
<dbReference type="Pfam" id="PF22935">
    <property type="entry name" value="RM44_endonuclase"/>
    <property type="match status" value="1"/>
</dbReference>
<dbReference type="SUPFAM" id="SSF54768">
    <property type="entry name" value="dsRNA-binding domain-like"/>
    <property type="match status" value="1"/>
</dbReference>
<dbReference type="SUPFAM" id="SSF69065">
    <property type="entry name" value="RNase III domain-like"/>
    <property type="match status" value="1"/>
</dbReference>
<dbReference type="PROSITE" id="PS50137">
    <property type="entry name" value="DS_RBD"/>
    <property type="match status" value="1"/>
</dbReference>
<name>RM44_PONAB</name>
<comment type="function">
    <text evidence="2">Component of the 39S subunit of mitochondrial ribosome. May have a function in the assembly/stability of nascent mitochondrial polypeptides exiting the ribosome.</text>
</comment>
<comment type="subunit">
    <text evidence="2">Component of the mitochondrial ribosome large subunit (39S) which comprises a 16S rRNA and about 50 distinct proteins.</text>
</comment>
<comment type="subcellular location">
    <subcellularLocation>
        <location evidence="2">Mitochondrion</location>
    </subcellularLocation>
</comment>
<comment type="similarity">
    <text evidence="4">Belongs to the ribonuclease III family. Mitochondrion-specific ribosomal protein mL44 subfamily.</text>
</comment>
<feature type="transit peptide" description="Mitochondrion" evidence="1">
    <location>
        <begin position="1"/>
        <end position="30"/>
    </location>
</feature>
<feature type="chain" id="PRO_0000030823" description="Large ribosomal subunit protein mL44">
    <location>
        <begin position="31"/>
        <end position="332"/>
    </location>
</feature>
<feature type="domain" description="RNase III">
    <location>
        <begin position="86"/>
        <end position="228"/>
    </location>
</feature>
<feature type="domain" description="DRBM" evidence="3">
    <location>
        <begin position="236"/>
        <end position="306"/>
    </location>
</feature>
<organism>
    <name type="scientific">Pongo abelii</name>
    <name type="common">Sumatran orangutan</name>
    <name type="synonym">Pongo pygmaeus abelii</name>
    <dbReference type="NCBI Taxonomy" id="9601"/>
    <lineage>
        <taxon>Eukaryota</taxon>
        <taxon>Metazoa</taxon>
        <taxon>Chordata</taxon>
        <taxon>Craniata</taxon>
        <taxon>Vertebrata</taxon>
        <taxon>Euteleostomi</taxon>
        <taxon>Mammalia</taxon>
        <taxon>Eutheria</taxon>
        <taxon>Euarchontoglires</taxon>
        <taxon>Primates</taxon>
        <taxon>Haplorrhini</taxon>
        <taxon>Catarrhini</taxon>
        <taxon>Hominidae</taxon>
        <taxon>Pongo</taxon>
    </lineage>
</organism>